<evidence type="ECO:0000250" key="1"/>
<evidence type="ECO:0000255" key="2"/>
<evidence type="ECO:0000256" key="3">
    <source>
        <dbReference type="SAM" id="MobiDB-lite"/>
    </source>
</evidence>
<evidence type="ECO:0000305" key="4"/>
<protein>
    <recommendedName>
        <fullName>Conotoxin Cl6.2</fullName>
    </recommendedName>
</protein>
<accession>D6C4K9</accession>
<organism>
    <name type="scientific">Californiconus californicus</name>
    <name type="common">California cone</name>
    <name type="synonym">Conus californicus</name>
    <dbReference type="NCBI Taxonomy" id="1736779"/>
    <lineage>
        <taxon>Eukaryota</taxon>
        <taxon>Metazoa</taxon>
        <taxon>Spiralia</taxon>
        <taxon>Lophotrochozoa</taxon>
        <taxon>Mollusca</taxon>
        <taxon>Gastropoda</taxon>
        <taxon>Caenogastropoda</taxon>
        <taxon>Neogastropoda</taxon>
        <taxon>Conoidea</taxon>
        <taxon>Conidae</taxon>
        <taxon>Californiconus</taxon>
    </lineage>
</organism>
<reference key="1">
    <citation type="journal article" date="2010" name="Mol. Phylogenet. Evol.">
        <title>Evolution of Conus peptide toxins: analysis of Conus californicus Reeve, 1844.</title>
        <authorList>
            <person name="Biggs J.S."/>
            <person name="Watkins M."/>
            <person name="Puillandre N."/>
            <person name="Ownby J.P."/>
            <person name="Lopez-Vera E."/>
            <person name="Christensen S."/>
            <person name="Moreno K.J."/>
            <person name="Bernaldez J."/>
            <person name="Licea-Navarro A."/>
            <person name="Corneli P.S."/>
            <person name="Olivera B.M."/>
        </authorList>
    </citation>
    <scope>NUCLEOTIDE SEQUENCE [GENOMIC DNA]</scope>
</reference>
<sequence length="76" mass="8376">MKLTCVLIVAVLVLTACQFTAAIDSRGGQENPAPRSTGLMRRKSQTERNCIPKNHFCGLLHHSRNCCTPTCLIVCF</sequence>
<feature type="signal peptide" evidence="2">
    <location>
        <begin position="1"/>
        <end position="22"/>
    </location>
</feature>
<feature type="propeptide" id="PRO_0000414971" evidence="1">
    <location>
        <begin position="23"/>
        <end position="47"/>
    </location>
</feature>
<feature type="peptide" id="PRO_0000414972" description="Conotoxin Cl6.2">
    <location>
        <begin position="49"/>
        <end position="76"/>
    </location>
</feature>
<feature type="region of interest" description="Disordered" evidence="3">
    <location>
        <begin position="25"/>
        <end position="44"/>
    </location>
</feature>
<feature type="disulfide bond" evidence="1">
    <location>
        <begin position="50"/>
        <end position="67"/>
    </location>
</feature>
<feature type="disulfide bond" evidence="1">
    <location>
        <begin position="57"/>
        <end position="71"/>
    </location>
</feature>
<feature type="disulfide bond" evidence="1">
    <location>
        <begin position="66"/>
        <end position="75"/>
    </location>
</feature>
<comment type="subcellular location">
    <subcellularLocation>
        <location evidence="1">Secreted</location>
    </subcellularLocation>
</comment>
<comment type="tissue specificity">
    <text>Expressed by the venom duct.</text>
</comment>
<comment type="domain">
    <text evidence="1">The presence of a 'disulfide through disulfide knot' structurally defines this protein as a knottin.</text>
</comment>
<comment type="domain">
    <text>The cysteine framework is VI/VII (C-C-CC-C-C).</text>
</comment>
<comment type="similarity">
    <text evidence="4">Belongs to the conotoxin O1 superfamily.</text>
</comment>
<proteinExistence type="inferred from homology"/>
<dbReference type="EMBL" id="FJ959151">
    <property type="protein sequence ID" value="ADB93121.1"/>
    <property type="molecule type" value="Genomic_DNA"/>
</dbReference>
<dbReference type="SMR" id="D6C4K9"/>
<dbReference type="ConoServer" id="4035">
    <property type="toxin name" value="Cal6.2 precursor"/>
</dbReference>
<dbReference type="GO" id="GO:0005576">
    <property type="term" value="C:extracellular region"/>
    <property type="evidence" value="ECO:0007669"/>
    <property type="project" value="UniProtKB-SubCell"/>
</dbReference>
<dbReference type="GO" id="GO:0008200">
    <property type="term" value="F:ion channel inhibitor activity"/>
    <property type="evidence" value="ECO:0007669"/>
    <property type="project" value="InterPro"/>
</dbReference>
<dbReference type="GO" id="GO:0090729">
    <property type="term" value="F:toxin activity"/>
    <property type="evidence" value="ECO:0007669"/>
    <property type="project" value="UniProtKB-KW"/>
</dbReference>
<dbReference type="InterPro" id="IPR004214">
    <property type="entry name" value="Conotoxin"/>
</dbReference>
<dbReference type="Pfam" id="PF02950">
    <property type="entry name" value="Conotoxin"/>
    <property type="match status" value="1"/>
</dbReference>
<keyword id="KW-1015">Disulfide bond</keyword>
<keyword id="KW-0960">Knottin</keyword>
<keyword id="KW-0528">Neurotoxin</keyword>
<keyword id="KW-0964">Secreted</keyword>
<keyword id="KW-0732">Signal</keyword>
<keyword id="KW-0800">Toxin</keyword>
<name>O162_CONCL</name>